<dbReference type="EC" id="3.1.26.5" evidence="1"/>
<dbReference type="EMBL" id="AP007281">
    <property type="protein sequence ID" value="BAG26335.1"/>
    <property type="molecule type" value="Genomic_DNA"/>
</dbReference>
<dbReference type="RefSeq" id="WP_003669484.1">
    <property type="nucleotide sequence ID" value="NC_010609.1"/>
</dbReference>
<dbReference type="SMR" id="B2GA53"/>
<dbReference type="KEGG" id="lrf:LAR_1819"/>
<dbReference type="HOGENOM" id="CLU_117179_9_1_9"/>
<dbReference type="GO" id="GO:0030677">
    <property type="term" value="C:ribonuclease P complex"/>
    <property type="evidence" value="ECO:0007669"/>
    <property type="project" value="TreeGrafter"/>
</dbReference>
<dbReference type="GO" id="GO:0042781">
    <property type="term" value="F:3'-tRNA processing endoribonuclease activity"/>
    <property type="evidence" value="ECO:0007669"/>
    <property type="project" value="TreeGrafter"/>
</dbReference>
<dbReference type="GO" id="GO:0004526">
    <property type="term" value="F:ribonuclease P activity"/>
    <property type="evidence" value="ECO:0007669"/>
    <property type="project" value="UniProtKB-UniRule"/>
</dbReference>
<dbReference type="GO" id="GO:0000049">
    <property type="term" value="F:tRNA binding"/>
    <property type="evidence" value="ECO:0007669"/>
    <property type="project" value="UniProtKB-UniRule"/>
</dbReference>
<dbReference type="GO" id="GO:0001682">
    <property type="term" value="P:tRNA 5'-leader removal"/>
    <property type="evidence" value="ECO:0007669"/>
    <property type="project" value="UniProtKB-UniRule"/>
</dbReference>
<dbReference type="FunFam" id="3.30.230.10:FF:000021">
    <property type="entry name" value="Ribonuclease P protein component"/>
    <property type="match status" value="1"/>
</dbReference>
<dbReference type="Gene3D" id="3.30.230.10">
    <property type="match status" value="1"/>
</dbReference>
<dbReference type="HAMAP" id="MF_00227">
    <property type="entry name" value="RNase_P"/>
    <property type="match status" value="1"/>
</dbReference>
<dbReference type="InterPro" id="IPR020568">
    <property type="entry name" value="Ribosomal_Su5_D2-typ_SF"/>
</dbReference>
<dbReference type="InterPro" id="IPR014721">
    <property type="entry name" value="Ribsml_uS5_D2-typ_fold_subgr"/>
</dbReference>
<dbReference type="InterPro" id="IPR000100">
    <property type="entry name" value="RNase_P"/>
</dbReference>
<dbReference type="NCBIfam" id="TIGR00188">
    <property type="entry name" value="rnpA"/>
    <property type="match status" value="1"/>
</dbReference>
<dbReference type="PANTHER" id="PTHR33992">
    <property type="entry name" value="RIBONUCLEASE P PROTEIN COMPONENT"/>
    <property type="match status" value="1"/>
</dbReference>
<dbReference type="PANTHER" id="PTHR33992:SF1">
    <property type="entry name" value="RIBONUCLEASE P PROTEIN COMPONENT"/>
    <property type="match status" value="1"/>
</dbReference>
<dbReference type="Pfam" id="PF00825">
    <property type="entry name" value="Ribonuclease_P"/>
    <property type="match status" value="1"/>
</dbReference>
<dbReference type="SUPFAM" id="SSF54211">
    <property type="entry name" value="Ribosomal protein S5 domain 2-like"/>
    <property type="match status" value="1"/>
</dbReference>
<name>RNPA_LIMRJ</name>
<gene>
    <name evidence="1" type="primary">rnpA</name>
    <name type="ordered locus">LAR_1819</name>
</gene>
<organism>
    <name type="scientific">Limosilactobacillus reuteri subsp. reuteri (strain JCM 1112)</name>
    <name type="common">Lactobacillus reuteri</name>
    <dbReference type="NCBI Taxonomy" id="557433"/>
    <lineage>
        <taxon>Bacteria</taxon>
        <taxon>Bacillati</taxon>
        <taxon>Bacillota</taxon>
        <taxon>Bacilli</taxon>
        <taxon>Lactobacillales</taxon>
        <taxon>Lactobacillaceae</taxon>
        <taxon>Limosilactobacillus</taxon>
    </lineage>
</organism>
<comment type="function">
    <text evidence="1">RNaseP catalyzes the removal of the 5'-leader sequence from pre-tRNA to produce the mature 5'-terminus. It can also cleave other RNA substrates such as 4.5S RNA. The protein component plays an auxiliary but essential role in vivo by binding to the 5'-leader sequence and broadening the substrate specificity of the ribozyme.</text>
</comment>
<comment type="catalytic activity">
    <reaction evidence="1">
        <text>Endonucleolytic cleavage of RNA, removing 5'-extranucleotides from tRNA precursor.</text>
        <dbReference type="EC" id="3.1.26.5"/>
    </reaction>
</comment>
<comment type="subunit">
    <text evidence="1">Consists of a catalytic RNA component (M1 or rnpB) and a protein subunit.</text>
</comment>
<comment type="similarity">
    <text evidence="1">Belongs to the RnpA family.</text>
</comment>
<evidence type="ECO:0000255" key="1">
    <source>
        <dbReference type="HAMAP-Rule" id="MF_00227"/>
    </source>
</evidence>
<proteinExistence type="inferred from homology"/>
<feature type="chain" id="PRO_1000100371" description="Ribonuclease P protein component">
    <location>
        <begin position="1"/>
        <end position="117"/>
    </location>
</feature>
<protein>
    <recommendedName>
        <fullName evidence="1">Ribonuclease P protein component</fullName>
        <shortName evidence="1">RNase P protein</shortName>
        <shortName evidence="1">RNaseP protein</shortName>
        <ecNumber evidence="1">3.1.26.5</ecNumber>
    </recommendedName>
    <alternativeName>
        <fullName evidence="1">Protein C5</fullName>
    </alternativeName>
</protein>
<sequence>MRKSYRIKKESEFQRVFETHNSVANHKFVVYQMEKPGQKHFRVGISVGKKIGNAVHRNWVKRRIRQTLLEVKPQLRSDVDFLVIARSAADGLSMAETKKNLVHVLNRAHLLDEKSED</sequence>
<accession>B2GA53</accession>
<reference key="1">
    <citation type="journal article" date="2008" name="DNA Res.">
        <title>Comparative genome analysis of Lactobacillus reuteri and Lactobacillus fermentum reveal a genomic island for reuterin and cobalamin production.</title>
        <authorList>
            <person name="Morita H."/>
            <person name="Toh H."/>
            <person name="Fukuda S."/>
            <person name="Horikawa H."/>
            <person name="Oshima K."/>
            <person name="Suzuki T."/>
            <person name="Murakami M."/>
            <person name="Hisamatsu S."/>
            <person name="Kato Y."/>
            <person name="Takizawa T."/>
            <person name="Fukuoka H."/>
            <person name="Yoshimura T."/>
            <person name="Itoh K."/>
            <person name="O'Sullivan D.J."/>
            <person name="McKay L.L."/>
            <person name="Ohno H."/>
            <person name="Kikuchi J."/>
            <person name="Masaoka T."/>
            <person name="Hattori M."/>
        </authorList>
    </citation>
    <scope>NUCLEOTIDE SEQUENCE [LARGE SCALE GENOMIC DNA]</scope>
    <source>
        <strain>JCM 1112</strain>
    </source>
</reference>
<keyword id="KW-0255">Endonuclease</keyword>
<keyword id="KW-0378">Hydrolase</keyword>
<keyword id="KW-0540">Nuclease</keyword>
<keyword id="KW-0694">RNA-binding</keyword>
<keyword id="KW-0819">tRNA processing</keyword>